<name>PPAF3_HOLDI</name>
<dbReference type="EC" id="3.4.21.-" evidence="7 8"/>
<dbReference type="EMBL" id="AB079666">
    <property type="protein sequence ID" value="BAC15604.1"/>
    <property type="molecule type" value="mRNA"/>
</dbReference>
<dbReference type="SMR" id="Q8I6K0"/>
<dbReference type="MEROPS" id="S01.204"/>
<dbReference type="GlyCosmos" id="Q8I6K0">
    <property type="glycosylation" value="1 site, No reported glycans"/>
</dbReference>
<dbReference type="GO" id="GO:0005576">
    <property type="term" value="C:extracellular region"/>
    <property type="evidence" value="ECO:0007669"/>
    <property type="project" value="UniProtKB-SubCell"/>
</dbReference>
<dbReference type="GO" id="GO:0004175">
    <property type="term" value="F:endopeptidase activity"/>
    <property type="evidence" value="ECO:0000314"/>
    <property type="project" value="UniProtKB"/>
</dbReference>
<dbReference type="GO" id="GO:0046872">
    <property type="term" value="F:metal ion binding"/>
    <property type="evidence" value="ECO:0007669"/>
    <property type="project" value="UniProtKB-KW"/>
</dbReference>
<dbReference type="GO" id="GO:0004252">
    <property type="term" value="F:serine-type endopeptidase activity"/>
    <property type="evidence" value="ECO:0007669"/>
    <property type="project" value="InterPro"/>
</dbReference>
<dbReference type="GO" id="GO:0045087">
    <property type="term" value="P:innate immune response"/>
    <property type="evidence" value="ECO:0007669"/>
    <property type="project" value="UniProtKB-KW"/>
</dbReference>
<dbReference type="GO" id="GO:0006508">
    <property type="term" value="P:proteolysis"/>
    <property type="evidence" value="ECO:0007669"/>
    <property type="project" value="UniProtKB-KW"/>
</dbReference>
<dbReference type="CDD" id="cd00190">
    <property type="entry name" value="Tryp_SPc"/>
    <property type="match status" value="1"/>
</dbReference>
<dbReference type="FunFam" id="2.40.10.10:FF:000015">
    <property type="entry name" value="Atrial natriuretic peptide-converting enzyme"/>
    <property type="match status" value="1"/>
</dbReference>
<dbReference type="Gene3D" id="3.30.1640.30">
    <property type="match status" value="1"/>
</dbReference>
<dbReference type="Gene3D" id="2.40.10.10">
    <property type="entry name" value="Trypsin-like serine proteases"/>
    <property type="match status" value="2"/>
</dbReference>
<dbReference type="InterPro" id="IPR022700">
    <property type="entry name" value="CLIP"/>
</dbReference>
<dbReference type="InterPro" id="IPR038565">
    <property type="entry name" value="CLIP_sf"/>
</dbReference>
<dbReference type="InterPro" id="IPR009003">
    <property type="entry name" value="Peptidase_S1_PA"/>
</dbReference>
<dbReference type="InterPro" id="IPR043504">
    <property type="entry name" value="Peptidase_S1_PA_chymotrypsin"/>
</dbReference>
<dbReference type="InterPro" id="IPR001314">
    <property type="entry name" value="Peptidase_S1A"/>
</dbReference>
<dbReference type="InterPro" id="IPR001254">
    <property type="entry name" value="Trypsin_dom"/>
</dbReference>
<dbReference type="InterPro" id="IPR018114">
    <property type="entry name" value="TRYPSIN_HIS"/>
</dbReference>
<dbReference type="InterPro" id="IPR033116">
    <property type="entry name" value="TRYPSIN_SER"/>
</dbReference>
<dbReference type="PANTHER" id="PTHR24252">
    <property type="entry name" value="ACROSIN-RELATED"/>
    <property type="match status" value="1"/>
</dbReference>
<dbReference type="PANTHER" id="PTHR24252:SF7">
    <property type="entry name" value="HYALIN"/>
    <property type="match status" value="1"/>
</dbReference>
<dbReference type="Pfam" id="PF12032">
    <property type="entry name" value="CLIP"/>
    <property type="match status" value="1"/>
</dbReference>
<dbReference type="Pfam" id="PF00089">
    <property type="entry name" value="Trypsin"/>
    <property type="match status" value="1"/>
</dbReference>
<dbReference type="PRINTS" id="PR00722">
    <property type="entry name" value="CHYMOTRYPSIN"/>
</dbReference>
<dbReference type="SMART" id="SM00680">
    <property type="entry name" value="CLIP"/>
    <property type="match status" value="1"/>
</dbReference>
<dbReference type="SMART" id="SM00020">
    <property type="entry name" value="Tryp_SPc"/>
    <property type="match status" value="1"/>
</dbReference>
<dbReference type="SUPFAM" id="SSF50494">
    <property type="entry name" value="Trypsin-like serine proteases"/>
    <property type="match status" value="1"/>
</dbReference>
<dbReference type="PROSITE" id="PS51888">
    <property type="entry name" value="CLIP"/>
    <property type="match status" value="1"/>
</dbReference>
<dbReference type="PROSITE" id="PS50240">
    <property type="entry name" value="TRYPSIN_DOM"/>
    <property type="match status" value="1"/>
</dbReference>
<dbReference type="PROSITE" id="PS00134">
    <property type="entry name" value="TRYPSIN_HIS"/>
    <property type="match status" value="1"/>
</dbReference>
<dbReference type="PROSITE" id="PS00135">
    <property type="entry name" value="TRYPSIN_SER"/>
    <property type="match status" value="1"/>
</dbReference>
<proteinExistence type="evidence at protein level"/>
<feature type="signal peptide" evidence="3">
    <location>
        <begin position="1"/>
        <end position="19"/>
    </location>
</feature>
<feature type="chain" id="PRO_5004308145" description="Phenoloxidase-activating factor 3 light chain" evidence="10">
    <location>
        <begin position="20"/>
        <end position="96"/>
    </location>
</feature>
<feature type="chain" id="PRO_0000443523" description="Phenoloxidase-activating factor 3 heavy chain" evidence="10">
    <location>
        <begin position="97"/>
        <end position="351"/>
    </location>
</feature>
<feature type="domain" description="Clip" evidence="6">
    <location>
        <begin position="22"/>
        <end position="73"/>
    </location>
</feature>
<feature type="domain" description="Peptidase S1" evidence="4">
    <location>
        <begin position="97"/>
        <end position="350"/>
    </location>
</feature>
<feature type="active site" description="Charge relay system" evidence="4">
    <location>
        <position position="142"/>
    </location>
</feature>
<feature type="active site" description="Charge relay system" evidence="4">
    <location>
        <position position="204"/>
    </location>
</feature>
<feature type="active site" description="Charge relay system" evidence="4">
    <location>
        <position position="299"/>
    </location>
</feature>
<feature type="binding site" evidence="2">
    <location>
        <position position="158"/>
    </location>
    <ligand>
        <name>Ca(2+)</name>
        <dbReference type="ChEBI" id="CHEBI:29108"/>
    </ligand>
</feature>
<feature type="binding site" evidence="2">
    <location>
        <position position="160"/>
    </location>
    <ligand>
        <name>Ca(2+)</name>
        <dbReference type="ChEBI" id="CHEBI:29108"/>
    </ligand>
</feature>
<feature type="binding site" evidence="2">
    <location>
        <position position="163"/>
    </location>
    <ligand>
        <name>Ca(2+)</name>
        <dbReference type="ChEBI" id="CHEBI:29108"/>
    </ligand>
</feature>
<feature type="binding site" evidence="2">
    <location>
        <position position="166"/>
    </location>
    <ligand>
        <name>Ca(2+)</name>
        <dbReference type="ChEBI" id="CHEBI:29108"/>
    </ligand>
</feature>
<feature type="site" description="Cleavage" evidence="1">
    <location>
        <begin position="96"/>
        <end position="97"/>
    </location>
</feature>
<feature type="glycosylation site" description="N-linked (GlcNAc...) asparagine" evidence="5">
    <location>
        <position position="16"/>
    </location>
</feature>
<feature type="disulfide bond" evidence="6">
    <location>
        <begin position="23"/>
        <end position="72"/>
    </location>
</feature>
<feature type="disulfide bond" evidence="6">
    <location>
        <begin position="33"/>
        <end position="64"/>
    </location>
</feature>
<feature type="disulfide bond" evidence="6">
    <location>
        <begin position="39"/>
        <end position="73"/>
    </location>
</feature>
<feature type="disulfide bond" evidence="1">
    <location>
        <begin position="89"/>
        <end position="224"/>
    </location>
</feature>
<feature type="disulfide bond" evidence="1">
    <location>
        <begin position="127"/>
        <end position="143"/>
    </location>
</feature>
<feature type="disulfide bond" evidence="1">
    <location>
        <begin position="167"/>
        <end position="176"/>
    </location>
</feature>
<feature type="disulfide bond" evidence="1">
    <location>
        <begin position="268"/>
        <end position="285"/>
    </location>
</feature>
<feature type="disulfide bond" evidence="1">
    <location>
        <begin position="295"/>
        <end position="326"/>
    </location>
</feature>
<accession>Q8I6K0</accession>
<comment type="function">
    <text evidence="7 8">Serine endopeptidase which, by cleaving prophenoloxidase activating factor PPAF2, is required for the activation of the prophenoloxidase cascade probably following the recognition of pathogen-derived products.</text>
</comment>
<comment type="activity regulation">
    <text evidence="7 8">Cleavage of PPAF2 is Ca(2+)-independent (PubMed:12185078). Inhibited by heparin (PubMed:17287215).</text>
</comment>
<comment type="subunit">
    <text evidence="10">In the active form, heterodimer of a light chain and a heavy chain; disulfide-linked (Probable).</text>
</comment>
<comment type="subcellular location">
    <subcellularLocation>
        <location evidence="7">Secreted</location>
    </subcellularLocation>
    <text evidence="7">Secreted in the hemolymph.</text>
</comment>
<comment type="domain">
    <text evidence="6">The clip domain consists of 35-55 residues which are 'knitted' together usually by 3 conserved disulfide bonds forming a clip-like compact structure.</text>
</comment>
<comment type="PTM">
    <text evidence="7">Proteolytically cleaved.</text>
</comment>
<comment type="similarity">
    <text evidence="6">Belongs to the peptidase S1 family. CLIP subfamily.</text>
</comment>
<gene>
    <name evidence="11" type="primary">PPAF3</name>
    <name evidence="9" type="synonym">PPAF-III</name>
</gene>
<sequence length="351" mass="37925">MWLSLVILGVASAIVNVSTQESCTTPNGETATCLPIESCKIFWDYVVTSGADPEINSFLRASLCRQGNYVVCCGSTLKFNSALPDRTECGLQDDFKVLGGEDTDLGEYPWMALLQQTKTSGAKSFGCGGSLISDRYVLTAAHCVVSSSYTVTMVRLGEWDLRATQDCVGSGSYQYCSPPPQDIGIESITSHPNYEKSSRGVFNDIALIRLARPVNRNKYVQPICLPLPTERTPVGENLLVAGWGATETKAQSDKKQKLKLPVTDLPACKTLYAKHNKIINDKMICAGGLKGKDSCKGDSGGPLFGQTGAGNAQFYIEGIVSYGAICGTEGFPAIYTRVSDHLDWIKQNVRV</sequence>
<protein>
    <recommendedName>
        <fullName evidence="10">Phenoloxidase-activating factor 3</fullName>
        <ecNumber evidence="7 8">3.4.21.-</ecNumber>
    </recommendedName>
    <alternativeName>
        <fullName evidence="9">Prophenoloxidase-activating factor III</fullName>
    </alternativeName>
    <alternativeName>
        <fullName evidence="10">Serine protease-like protein PPAF-3</fullName>
    </alternativeName>
    <component>
        <recommendedName>
            <fullName evidence="10">Phenoloxidase-activating factor 3 light chain</fullName>
        </recommendedName>
    </component>
    <component>
        <recommendedName>
            <fullName evidence="10">Phenoloxidase-activating factor 3 heavy chain</fullName>
        </recommendedName>
    </component>
</protein>
<keyword id="KW-0106">Calcium</keyword>
<keyword id="KW-0903">Direct protein sequencing</keyword>
<keyword id="KW-1015">Disulfide bond</keyword>
<keyword id="KW-0325">Glycoprotein</keyword>
<keyword id="KW-0378">Hydrolase</keyword>
<keyword id="KW-0391">Immunity</keyword>
<keyword id="KW-0399">Innate immunity</keyword>
<keyword id="KW-0479">Metal-binding</keyword>
<keyword id="KW-0645">Protease</keyword>
<keyword id="KW-0964">Secreted</keyword>
<keyword id="KW-0720">Serine protease</keyword>
<keyword id="KW-0732">Signal</keyword>
<keyword id="KW-0865">Zymogen</keyword>
<evidence type="ECO:0000250" key="1">
    <source>
        <dbReference type="UniProtKB" id="O97366"/>
    </source>
</evidence>
<evidence type="ECO:0000250" key="2">
    <source>
        <dbReference type="UniProtKB" id="Q9GRW0"/>
    </source>
</evidence>
<evidence type="ECO:0000255" key="3"/>
<evidence type="ECO:0000255" key="4">
    <source>
        <dbReference type="PROSITE-ProRule" id="PRU00274"/>
    </source>
</evidence>
<evidence type="ECO:0000255" key="5">
    <source>
        <dbReference type="PROSITE-ProRule" id="PRU00498"/>
    </source>
</evidence>
<evidence type="ECO:0000255" key="6">
    <source>
        <dbReference type="PROSITE-ProRule" id="PRU01236"/>
    </source>
</evidence>
<evidence type="ECO:0000269" key="7">
    <source>
    </source>
</evidence>
<evidence type="ECO:0000269" key="8">
    <source>
    </source>
</evidence>
<evidence type="ECO:0000303" key="9">
    <source>
    </source>
</evidence>
<evidence type="ECO:0000305" key="10"/>
<evidence type="ECO:0000305" key="11">
    <source>
    </source>
</evidence>
<evidence type="ECO:0000312" key="12">
    <source>
        <dbReference type="EMBL" id="BAC15604.1"/>
    </source>
</evidence>
<reference evidence="12" key="1">
    <citation type="journal article" date="2002" name="J. Biol. Chem.">
        <title>A new easter-type serine protease cleaves a masquerade-like protein during prophenoloxidase activation in Holotrichia diomphalia larvae.</title>
        <authorList>
            <person name="Kim M.S."/>
            <person name="Baek M.J."/>
            <person name="Lee M.H."/>
            <person name="Park J.W."/>
            <person name="Lee S.Y."/>
            <person name="Soderhall K."/>
            <person name="Lee B.L."/>
        </authorList>
    </citation>
    <scope>NUCLEOTIDE SEQUENCE [MRNA]</scope>
    <scope>PROTEIN SEQUENCE OF 217-224</scope>
    <scope>FUNCTION</scope>
    <scope>CATALYTIC ACTIVITY</scope>
    <scope>ACTIVITY REGULATION</scope>
    <scope>SUBCELLULAR LOCATION</scope>
    <scope>PROTEOLYTIC CLEAVAGE</scope>
</reference>
<reference evidence="10" key="2">
    <citation type="journal article" date="2007" name="J. Biol. Chem.">
        <title>Crystal structure of the serine protease domain of prophenoloxidase activating factor-I.</title>
        <authorList>
            <person name="Piao S."/>
            <person name="Kim S."/>
            <person name="Kim J.H."/>
            <person name="Park J.W."/>
            <person name="Lee B.L."/>
            <person name="Ha N.C."/>
        </authorList>
    </citation>
    <scope>FUNCTION</scope>
    <scope>CATALYTIC ACTIVITY</scope>
    <scope>ACTIVITY REGULATION</scope>
</reference>
<organism evidence="12">
    <name type="scientific">Holotrichia diomphalia</name>
    <name type="common">Korean black chafer</name>
    <dbReference type="NCBI Taxonomy" id="33394"/>
    <lineage>
        <taxon>Eukaryota</taxon>
        <taxon>Metazoa</taxon>
        <taxon>Ecdysozoa</taxon>
        <taxon>Arthropoda</taxon>
        <taxon>Hexapoda</taxon>
        <taxon>Insecta</taxon>
        <taxon>Pterygota</taxon>
        <taxon>Neoptera</taxon>
        <taxon>Endopterygota</taxon>
        <taxon>Coleoptera</taxon>
        <taxon>Polyphaga</taxon>
        <taxon>Scarabaeiformia</taxon>
        <taxon>Scarabaeidae</taxon>
        <taxon>Melolonthinae</taxon>
        <taxon>Holotrichia</taxon>
    </lineage>
</organism>